<dbReference type="EMBL" id="CP000075">
    <property type="protein sequence ID" value="AAY39560.1"/>
    <property type="molecule type" value="Genomic_DNA"/>
</dbReference>
<dbReference type="RefSeq" id="WP_002555471.1">
    <property type="nucleotide sequence ID" value="NC_007005.1"/>
</dbReference>
<dbReference type="RefSeq" id="YP_237598.1">
    <property type="nucleotide sequence ID" value="NC_007005.1"/>
</dbReference>
<dbReference type="SMR" id="Q4ZMR2"/>
<dbReference type="STRING" id="205918.Psyr_4530"/>
<dbReference type="GeneID" id="77280356"/>
<dbReference type="KEGG" id="psb:Psyr_4530"/>
<dbReference type="PATRIC" id="fig|205918.7.peg.4669"/>
<dbReference type="eggNOG" id="COG1841">
    <property type="taxonomic scope" value="Bacteria"/>
</dbReference>
<dbReference type="HOGENOM" id="CLU_131047_1_4_6"/>
<dbReference type="OrthoDB" id="9812790at2"/>
<dbReference type="Proteomes" id="UP000000426">
    <property type="component" value="Chromosome"/>
</dbReference>
<dbReference type="GO" id="GO:0015934">
    <property type="term" value="C:large ribosomal subunit"/>
    <property type="evidence" value="ECO:0007669"/>
    <property type="project" value="InterPro"/>
</dbReference>
<dbReference type="GO" id="GO:0003735">
    <property type="term" value="F:structural constituent of ribosome"/>
    <property type="evidence" value="ECO:0007669"/>
    <property type="project" value="InterPro"/>
</dbReference>
<dbReference type="GO" id="GO:0006412">
    <property type="term" value="P:translation"/>
    <property type="evidence" value="ECO:0007669"/>
    <property type="project" value="UniProtKB-UniRule"/>
</dbReference>
<dbReference type="CDD" id="cd01658">
    <property type="entry name" value="Ribosomal_L30"/>
    <property type="match status" value="1"/>
</dbReference>
<dbReference type="FunFam" id="3.30.1390.20:FF:000001">
    <property type="entry name" value="50S ribosomal protein L30"/>
    <property type="match status" value="1"/>
</dbReference>
<dbReference type="Gene3D" id="3.30.1390.20">
    <property type="entry name" value="Ribosomal protein L30, ferredoxin-like fold domain"/>
    <property type="match status" value="1"/>
</dbReference>
<dbReference type="HAMAP" id="MF_01371_B">
    <property type="entry name" value="Ribosomal_uL30_B"/>
    <property type="match status" value="1"/>
</dbReference>
<dbReference type="InterPro" id="IPR036919">
    <property type="entry name" value="Ribo_uL30_ferredoxin-like_sf"/>
</dbReference>
<dbReference type="InterPro" id="IPR005996">
    <property type="entry name" value="Ribosomal_uL30_bac-type"/>
</dbReference>
<dbReference type="InterPro" id="IPR016082">
    <property type="entry name" value="Ribosomal_uL30_ferredoxin-like"/>
</dbReference>
<dbReference type="NCBIfam" id="TIGR01308">
    <property type="entry name" value="rpmD_bact"/>
    <property type="match status" value="1"/>
</dbReference>
<dbReference type="Pfam" id="PF00327">
    <property type="entry name" value="Ribosomal_L30"/>
    <property type="match status" value="1"/>
</dbReference>
<dbReference type="PIRSF" id="PIRSF002211">
    <property type="entry name" value="Ribosomal_L30_bac-type"/>
    <property type="match status" value="1"/>
</dbReference>
<dbReference type="SUPFAM" id="SSF55129">
    <property type="entry name" value="Ribosomal protein L30p/L7e"/>
    <property type="match status" value="1"/>
</dbReference>
<feature type="chain" id="PRO_0000273831" description="Large ribosomal subunit protein uL30">
    <location>
        <begin position="1"/>
        <end position="58"/>
    </location>
</feature>
<accession>Q4ZMR2</accession>
<sequence>MATVKVTLIKSMTGRIPNHRLCIKGLGLRRIGHTVEVLDTPENRGMINKAYYMLRVEG</sequence>
<gene>
    <name evidence="1" type="primary">rpmD</name>
    <name type="ordered locus">Psyr_4530</name>
</gene>
<comment type="subunit">
    <text evidence="1">Part of the 50S ribosomal subunit.</text>
</comment>
<comment type="similarity">
    <text evidence="1">Belongs to the universal ribosomal protein uL30 family.</text>
</comment>
<protein>
    <recommendedName>
        <fullName evidence="1">Large ribosomal subunit protein uL30</fullName>
    </recommendedName>
    <alternativeName>
        <fullName evidence="2">50S ribosomal protein L30</fullName>
    </alternativeName>
</protein>
<name>RL30_PSEU2</name>
<keyword id="KW-0687">Ribonucleoprotein</keyword>
<keyword id="KW-0689">Ribosomal protein</keyword>
<proteinExistence type="inferred from homology"/>
<reference key="1">
    <citation type="journal article" date="2005" name="Proc. Natl. Acad. Sci. U.S.A.">
        <title>Comparison of the complete genome sequences of Pseudomonas syringae pv. syringae B728a and pv. tomato DC3000.</title>
        <authorList>
            <person name="Feil H."/>
            <person name="Feil W.S."/>
            <person name="Chain P."/>
            <person name="Larimer F."/>
            <person name="Dibartolo G."/>
            <person name="Copeland A."/>
            <person name="Lykidis A."/>
            <person name="Trong S."/>
            <person name="Nolan M."/>
            <person name="Goltsman E."/>
            <person name="Thiel J."/>
            <person name="Malfatti S."/>
            <person name="Loper J.E."/>
            <person name="Lapidus A."/>
            <person name="Detter J.C."/>
            <person name="Land M."/>
            <person name="Richardson P.M."/>
            <person name="Kyrpides N.C."/>
            <person name="Ivanova N."/>
            <person name="Lindow S.E."/>
        </authorList>
    </citation>
    <scope>NUCLEOTIDE SEQUENCE [LARGE SCALE GENOMIC DNA]</scope>
    <source>
        <strain>B728a</strain>
    </source>
</reference>
<evidence type="ECO:0000255" key="1">
    <source>
        <dbReference type="HAMAP-Rule" id="MF_01371"/>
    </source>
</evidence>
<evidence type="ECO:0000305" key="2"/>
<organism>
    <name type="scientific">Pseudomonas syringae pv. syringae (strain B728a)</name>
    <dbReference type="NCBI Taxonomy" id="205918"/>
    <lineage>
        <taxon>Bacteria</taxon>
        <taxon>Pseudomonadati</taxon>
        <taxon>Pseudomonadota</taxon>
        <taxon>Gammaproteobacteria</taxon>
        <taxon>Pseudomonadales</taxon>
        <taxon>Pseudomonadaceae</taxon>
        <taxon>Pseudomonas</taxon>
        <taxon>Pseudomonas syringae</taxon>
    </lineage>
</organism>